<feature type="chain" id="PRO_0000061594" description="Cytochrome b">
    <location>
        <begin position="1"/>
        <end position="379"/>
    </location>
</feature>
<feature type="transmembrane region" description="Helical" evidence="2">
    <location>
        <begin position="33"/>
        <end position="53"/>
    </location>
</feature>
<feature type="transmembrane region" description="Helical" evidence="2">
    <location>
        <begin position="77"/>
        <end position="98"/>
    </location>
</feature>
<feature type="transmembrane region" description="Helical" evidence="2">
    <location>
        <begin position="113"/>
        <end position="133"/>
    </location>
</feature>
<feature type="transmembrane region" description="Helical" evidence="2">
    <location>
        <begin position="178"/>
        <end position="198"/>
    </location>
</feature>
<feature type="transmembrane region" description="Helical" evidence="2">
    <location>
        <begin position="226"/>
        <end position="246"/>
    </location>
</feature>
<feature type="transmembrane region" description="Helical" evidence="2">
    <location>
        <begin position="288"/>
        <end position="308"/>
    </location>
</feature>
<feature type="transmembrane region" description="Helical" evidence="2">
    <location>
        <begin position="320"/>
        <end position="340"/>
    </location>
</feature>
<feature type="transmembrane region" description="Helical" evidence="2">
    <location>
        <begin position="347"/>
        <end position="367"/>
    </location>
</feature>
<feature type="binding site" description="axial binding residue" evidence="2">
    <location>
        <position position="83"/>
    </location>
    <ligand>
        <name>heme b</name>
        <dbReference type="ChEBI" id="CHEBI:60344"/>
        <label>b562</label>
    </ligand>
    <ligandPart>
        <name>Fe</name>
        <dbReference type="ChEBI" id="CHEBI:18248"/>
    </ligandPart>
</feature>
<feature type="binding site" description="axial binding residue" evidence="2">
    <location>
        <position position="97"/>
    </location>
    <ligand>
        <name>heme b</name>
        <dbReference type="ChEBI" id="CHEBI:60344"/>
        <label>b566</label>
    </ligand>
    <ligandPart>
        <name>Fe</name>
        <dbReference type="ChEBI" id="CHEBI:18248"/>
    </ligandPart>
</feature>
<feature type="binding site" description="axial binding residue" evidence="2">
    <location>
        <position position="182"/>
    </location>
    <ligand>
        <name>heme b</name>
        <dbReference type="ChEBI" id="CHEBI:60344"/>
        <label>b562</label>
    </ligand>
    <ligandPart>
        <name>Fe</name>
        <dbReference type="ChEBI" id="CHEBI:18248"/>
    </ligandPart>
</feature>
<feature type="binding site" description="axial binding residue" evidence="2">
    <location>
        <position position="196"/>
    </location>
    <ligand>
        <name>heme b</name>
        <dbReference type="ChEBI" id="CHEBI:60344"/>
        <label>b566</label>
    </ligand>
    <ligandPart>
        <name>Fe</name>
        <dbReference type="ChEBI" id="CHEBI:18248"/>
    </ligandPart>
</feature>
<feature type="binding site" evidence="2">
    <location>
        <position position="201"/>
    </location>
    <ligand>
        <name>a ubiquinone</name>
        <dbReference type="ChEBI" id="CHEBI:16389"/>
    </ligand>
</feature>
<protein>
    <recommendedName>
        <fullName>Cytochrome b</fullName>
    </recommendedName>
    <alternativeName>
        <fullName>Complex III subunit 3</fullName>
    </alternativeName>
    <alternativeName>
        <fullName>Complex III subunit III</fullName>
    </alternativeName>
    <alternativeName>
        <fullName>Cytochrome b-c1 complex subunit 3</fullName>
    </alternativeName>
    <alternativeName>
        <fullName>Ubiquinol-cytochrome-c reductase complex cytochrome b subunit</fullName>
    </alternativeName>
</protein>
<organism>
    <name type="scientific">Spermophilus erythrogenys</name>
    <name type="common">Red-cheeked ground squirrel</name>
    <dbReference type="NCBI Taxonomy" id="99840"/>
    <lineage>
        <taxon>Eukaryota</taxon>
        <taxon>Metazoa</taxon>
        <taxon>Chordata</taxon>
        <taxon>Craniata</taxon>
        <taxon>Vertebrata</taxon>
        <taxon>Euteleostomi</taxon>
        <taxon>Mammalia</taxon>
        <taxon>Eutheria</taxon>
        <taxon>Euarchontoglires</taxon>
        <taxon>Glires</taxon>
        <taxon>Rodentia</taxon>
        <taxon>Sciuromorpha</taxon>
        <taxon>Sciuridae</taxon>
        <taxon>Xerinae</taxon>
        <taxon>Marmotini</taxon>
        <taxon>Spermophilus</taxon>
    </lineage>
</organism>
<evidence type="ECO:0000250" key="1"/>
<evidence type="ECO:0000250" key="2">
    <source>
        <dbReference type="UniProtKB" id="P00157"/>
    </source>
</evidence>
<evidence type="ECO:0000255" key="3">
    <source>
        <dbReference type="PROSITE-ProRule" id="PRU00967"/>
    </source>
</evidence>
<evidence type="ECO:0000255" key="4">
    <source>
        <dbReference type="PROSITE-ProRule" id="PRU00968"/>
    </source>
</evidence>
<proteinExistence type="inferred from homology"/>
<geneLocation type="mitochondrion"/>
<sequence>MTNTRKTHPLXKIINHSFIDLPAPSNISAWWNFGSLLGLCLIIQILTGLFLAMHYTSDTMTAFSSVTHICRDVNYGWLIRYMHANGASMFFICLFLHVGRGMYYGSYTYFETWNIGVILLFAVMATAFMGYVLPWGQMSFXGATVITNLLSAIPYIGTTLVEWIWGGFSVDKATLTRFFAFHFILPFIIAALVMVHLLFLHETGSNNPSGIISDSDKIPFHPYYTIKDILGVLLLVLTLMALVLFSPDLLGDPDNYTPANPLSTPPHIKPEWYFLFAYAILRSIPNKLGGVLALVFSILILMLFPLLHLSKQRSMMFRPLSQCVFWILVADLFTLTWIGGQPVEHPFIIIGQLASILYFAIILLILPTVSMIENKLLKW</sequence>
<gene>
    <name type="primary">MT-CYB</name>
    <name type="synonym">COB</name>
    <name type="synonym">CYTB</name>
    <name type="synonym">MTCYB</name>
</gene>
<comment type="function">
    <text evidence="2">Component of the ubiquinol-cytochrome c reductase complex (complex III or cytochrome b-c1 complex) that is part of the mitochondrial respiratory chain. The b-c1 complex mediates electron transfer from ubiquinol to cytochrome c. Contributes to the generation of a proton gradient across the mitochondrial membrane that is then used for ATP synthesis.</text>
</comment>
<comment type="cofactor">
    <cofactor evidence="2">
        <name>heme b</name>
        <dbReference type="ChEBI" id="CHEBI:60344"/>
    </cofactor>
    <text evidence="2">Binds 2 heme b groups non-covalently.</text>
</comment>
<comment type="subunit">
    <text evidence="2">The cytochrome bc1 complex contains 11 subunits: 3 respiratory subunits (MT-CYB, CYC1 and UQCRFS1), 2 core proteins (UQCRC1 and UQCRC2) and 6 low-molecular weight proteins (UQCRH/QCR6, UQCRB/QCR7, UQCRQ/QCR8, UQCR10/QCR9, UQCR11/QCR10 and a cleavage product of UQCRFS1). This cytochrome bc1 complex then forms a dimer.</text>
</comment>
<comment type="subcellular location">
    <subcellularLocation>
        <location evidence="2">Mitochondrion inner membrane</location>
        <topology evidence="2">Multi-pass membrane protein</topology>
    </subcellularLocation>
</comment>
<comment type="miscellaneous">
    <text evidence="1">Heme 1 (or BL or b562) is low-potential and absorbs at about 562 nm, and heme 2 (or BH or b566) is high-potential and absorbs at about 566 nm.</text>
</comment>
<comment type="similarity">
    <text evidence="3 4">Belongs to the cytochrome b family.</text>
</comment>
<comment type="caution">
    <text evidence="2">The full-length protein contains only eight transmembrane helices, not nine as predicted by bioinformatics tools.</text>
</comment>
<name>CYB_SPEER</name>
<accession>Q9TF74</accession>
<dbReference type="EMBL" id="AF157875">
    <property type="protein sequence ID" value="AAD50159.1"/>
    <property type="molecule type" value="Genomic_DNA"/>
</dbReference>
<dbReference type="GO" id="GO:0005743">
    <property type="term" value="C:mitochondrial inner membrane"/>
    <property type="evidence" value="ECO:0007669"/>
    <property type="project" value="UniProtKB-SubCell"/>
</dbReference>
<dbReference type="GO" id="GO:0045275">
    <property type="term" value="C:respiratory chain complex III"/>
    <property type="evidence" value="ECO:0007669"/>
    <property type="project" value="InterPro"/>
</dbReference>
<dbReference type="GO" id="GO:0046872">
    <property type="term" value="F:metal ion binding"/>
    <property type="evidence" value="ECO:0007669"/>
    <property type="project" value="UniProtKB-KW"/>
</dbReference>
<dbReference type="GO" id="GO:0008121">
    <property type="term" value="F:ubiquinol-cytochrome-c reductase activity"/>
    <property type="evidence" value="ECO:0007669"/>
    <property type="project" value="InterPro"/>
</dbReference>
<dbReference type="GO" id="GO:0006122">
    <property type="term" value="P:mitochondrial electron transport, ubiquinol to cytochrome c"/>
    <property type="evidence" value="ECO:0007669"/>
    <property type="project" value="TreeGrafter"/>
</dbReference>
<dbReference type="CDD" id="cd00290">
    <property type="entry name" value="cytochrome_b_C"/>
    <property type="match status" value="1"/>
</dbReference>
<dbReference type="CDD" id="cd00284">
    <property type="entry name" value="Cytochrome_b_N"/>
    <property type="match status" value="1"/>
</dbReference>
<dbReference type="FunFam" id="1.20.810.10:FF:000002">
    <property type="entry name" value="Cytochrome b"/>
    <property type="match status" value="1"/>
</dbReference>
<dbReference type="Gene3D" id="1.20.810.10">
    <property type="entry name" value="Cytochrome Bc1 Complex, Chain C"/>
    <property type="match status" value="1"/>
</dbReference>
<dbReference type="InterPro" id="IPR005798">
    <property type="entry name" value="Cyt_b/b6_C"/>
</dbReference>
<dbReference type="InterPro" id="IPR036150">
    <property type="entry name" value="Cyt_b/b6_C_sf"/>
</dbReference>
<dbReference type="InterPro" id="IPR005797">
    <property type="entry name" value="Cyt_b/b6_N"/>
</dbReference>
<dbReference type="InterPro" id="IPR027387">
    <property type="entry name" value="Cytb/b6-like_sf"/>
</dbReference>
<dbReference type="InterPro" id="IPR030689">
    <property type="entry name" value="Cytochrome_b"/>
</dbReference>
<dbReference type="InterPro" id="IPR048260">
    <property type="entry name" value="Cytochrome_b_C_euk/bac"/>
</dbReference>
<dbReference type="InterPro" id="IPR048259">
    <property type="entry name" value="Cytochrome_b_N_euk/bac"/>
</dbReference>
<dbReference type="InterPro" id="IPR016174">
    <property type="entry name" value="Di-haem_cyt_TM"/>
</dbReference>
<dbReference type="PANTHER" id="PTHR19271">
    <property type="entry name" value="CYTOCHROME B"/>
    <property type="match status" value="1"/>
</dbReference>
<dbReference type="PANTHER" id="PTHR19271:SF16">
    <property type="entry name" value="CYTOCHROME B"/>
    <property type="match status" value="1"/>
</dbReference>
<dbReference type="Pfam" id="PF00032">
    <property type="entry name" value="Cytochrom_B_C"/>
    <property type="match status" value="1"/>
</dbReference>
<dbReference type="Pfam" id="PF00033">
    <property type="entry name" value="Cytochrome_B"/>
    <property type="match status" value="1"/>
</dbReference>
<dbReference type="PIRSF" id="PIRSF038885">
    <property type="entry name" value="COB"/>
    <property type="match status" value="1"/>
</dbReference>
<dbReference type="SUPFAM" id="SSF81648">
    <property type="entry name" value="a domain/subunit of cytochrome bc1 complex (Ubiquinol-cytochrome c reductase)"/>
    <property type="match status" value="1"/>
</dbReference>
<dbReference type="SUPFAM" id="SSF81342">
    <property type="entry name" value="Transmembrane di-heme cytochromes"/>
    <property type="match status" value="1"/>
</dbReference>
<dbReference type="PROSITE" id="PS51003">
    <property type="entry name" value="CYTB_CTER"/>
    <property type="match status" value="1"/>
</dbReference>
<dbReference type="PROSITE" id="PS51002">
    <property type="entry name" value="CYTB_NTER"/>
    <property type="match status" value="1"/>
</dbReference>
<reference key="1">
    <citation type="submission" date="1999-06" db="EMBL/GenBank/DDBJ databases">
        <title>A molecular phylogeny of ground squirrels and prairie dogs.</title>
        <authorList>
            <person name="Harrison R.G."/>
            <person name="Sherman P.W."/>
            <person name="Yensen E."/>
            <person name="Hoffmann R.S."/>
            <person name="Bogdanowicz S.M."/>
        </authorList>
    </citation>
    <scope>NUCLEOTIDE SEQUENCE [GENOMIC DNA]</scope>
    <source>
        <strain>Isolate S136</strain>
    </source>
</reference>
<keyword id="KW-0249">Electron transport</keyword>
<keyword id="KW-0349">Heme</keyword>
<keyword id="KW-0408">Iron</keyword>
<keyword id="KW-0472">Membrane</keyword>
<keyword id="KW-0479">Metal-binding</keyword>
<keyword id="KW-0496">Mitochondrion</keyword>
<keyword id="KW-0999">Mitochondrion inner membrane</keyword>
<keyword id="KW-0679">Respiratory chain</keyword>
<keyword id="KW-0812">Transmembrane</keyword>
<keyword id="KW-1133">Transmembrane helix</keyword>
<keyword id="KW-0813">Transport</keyword>
<keyword id="KW-0830">Ubiquinone</keyword>